<sequence length="416" mass="46939">MENITLDELGNFTLTNLRKLAKEHKIEGYSTIPKMELLNRLCYSIATAEGLIYSYGELDIINETYGFLRNTPQNIDVYVSNSQIKKFGLRQGDVIVGEVRKPLNDEKNFGLLKLIYVNGEKGELSRQRPIFDDLTPSYPIERLELGEGTVSSRIIDLIAPIGKGQRGLIVAPPKAGKTTILSDLANDILKYNKDVQVWIILIDERPEEVTDIKENVKNAEIFAATFDENTSVHLSVTEKVLEAAKREIEKGNNIVILMDSLTRLARSYNIEMPSSGKLLSGGIDPKSLYMPKKFLGAARKIRGGGSLTILATALIETGSRMDEVIFEEFKGTGNMELVLDRALQQLRLFPAVDILKSGTRKEELLYSKREFDSILKLRKFLLKLNEAEALKFLMDLIKRYSSNKDLLENIDYELKL</sequence>
<accession>D1AWS1</accession>
<gene>
    <name evidence="1" type="primary">rho</name>
    <name type="ordered locus">Smon_0262</name>
</gene>
<proteinExistence type="inferred from homology"/>
<reference key="1">
    <citation type="journal article" date="2009" name="Stand. Genomic Sci.">
        <title>Complete genome sequence of Streptobacillus moniliformis type strain (9901T).</title>
        <authorList>
            <person name="Nolan M."/>
            <person name="Gronow S."/>
            <person name="Lapidus A."/>
            <person name="Ivanova N."/>
            <person name="Copeland A."/>
            <person name="Lucas S."/>
            <person name="Glavina Del Rio T."/>
            <person name="Chen F."/>
            <person name="Tice H."/>
            <person name="Pitluck S."/>
            <person name="Cheng J.F."/>
            <person name="Sims D."/>
            <person name="Meincke L."/>
            <person name="Bruce D."/>
            <person name="Goodwin L."/>
            <person name="Brettin T."/>
            <person name="Han C."/>
            <person name="Detter J.C."/>
            <person name="Pati A."/>
            <person name="Mavromatis K."/>
            <person name="Mikhailova N."/>
            <person name="Chen A."/>
            <person name="Palaniappan K."/>
            <person name="Land M."/>
            <person name="Hauser L."/>
            <person name="Chang Y.J."/>
            <person name="Jeffries C.D."/>
            <person name="Rohde M."/>
            <person name="Sproer C."/>
            <person name="Goker M."/>
            <person name="Bristow J."/>
            <person name="Eisen J.A."/>
            <person name="Markowitz V."/>
            <person name="Hugenholtz P."/>
            <person name="Kyrpides N.C."/>
            <person name="Klenk H.P."/>
        </authorList>
    </citation>
    <scope>NUCLEOTIDE SEQUENCE [LARGE SCALE GENOMIC DNA]</scope>
    <source>
        <strain>ATCC 14647 / DSM 12112 / NCTC 10651 / 9901</strain>
    </source>
</reference>
<protein>
    <recommendedName>
        <fullName evidence="1">Transcription termination factor Rho</fullName>
        <ecNumber evidence="1">3.6.4.-</ecNumber>
    </recommendedName>
    <alternativeName>
        <fullName evidence="1">ATP-dependent helicase Rho</fullName>
    </alternativeName>
</protein>
<keyword id="KW-0067">ATP-binding</keyword>
<keyword id="KW-0347">Helicase</keyword>
<keyword id="KW-0378">Hydrolase</keyword>
<keyword id="KW-0547">Nucleotide-binding</keyword>
<keyword id="KW-1185">Reference proteome</keyword>
<keyword id="KW-0694">RNA-binding</keyword>
<keyword id="KW-0804">Transcription</keyword>
<keyword id="KW-0805">Transcription regulation</keyword>
<keyword id="KW-0806">Transcription termination</keyword>
<feature type="chain" id="PRO_0000398672" description="Transcription termination factor Rho">
    <location>
        <begin position="1"/>
        <end position="416"/>
    </location>
</feature>
<feature type="domain" description="Rho RNA-BD" evidence="2">
    <location>
        <begin position="51"/>
        <end position="121"/>
    </location>
</feature>
<feature type="binding site" evidence="1">
    <location>
        <begin position="162"/>
        <end position="167"/>
    </location>
    <ligand>
        <name>ATP</name>
        <dbReference type="ChEBI" id="CHEBI:30616"/>
    </ligand>
</feature>
<feature type="binding site" evidence="1">
    <location>
        <begin position="174"/>
        <end position="179"/>
    </location>
    <ligand>
        <name>ATP</name>
        <dbReference type="ChEBI" id="CHEBI:30616"/>
    </ligand>
</feature>
<feature type="binding site" evidence="1">
    <location>
        <position position="205"/>
    </location>
    <ligand>
        <name>ATP</name>
        <dbReference type="ChEBI" id="CHEBI:30616"/>
    </ligand>
</feature>
<dbReference type="EC" id="3.6.4.-" evidence="1"/>
<dbReference type="EMBL" id="CP001779">
    <property type="protein sequence ID" value="ACZ00747.1"/>
    <property type="molecule type" value="Genomic_DNA"/>
</dbReference>
<dbReference type="RefSeq" id="WP_012858304.1">
    <property type="nucleotide sequence ID" value="NC_013515.1"/>
</dbReference>
<dbReference type="SMR" id="D1AWS1"/>
<dbReference type="STRING" id="519441.Smon_0262"/>
<dbReference type="GeneID" id="29674055"/>
<dbReference type="KEGG" id="smf:Smon_0262"/>
<dbReference type="eggNOG" id="COG1158">
    <property type="taxonomic scope" value="Bacteria"/>
</dbReference>
<dbReference type="HOGENOM" id="CLU_016377_4_3_0"/>
<dbReference type="OrthoDB" id="9805197at2"/>
<dbReference type="Proteomes" id="UP000002072">
    <property type="component" value="Chromosome"/>
</dbReference>
<dbReference type="GO" id="GO:0005524">
    <property type="term" value="F:ATP binding"/>
    <property type="evidence" value="ECO:0007669"/>
    <property type="project" value="UniProtKB-UniRule"/>
</dbReference>
<dbReference type="GO" id="GO:0016887">
    <property type="term" value="F:ATP hydrolysis activity"/>
    <property type="evidence" value="ECO:0007669"/>
    <property type="project" value="InterPro"/>
</dbReference>
<dbReference type="GO" id="GO:0008186">
    <property type="term" value="F:ATP-dependent activity, acting on RNA"/>
    <property type="evidence" value="ECO:0007669"/>
    <property type="project" value="InterPro"/>
</dbReference>
<dbReference type="GO" id="GO:0004386">
    <property type="term" value="F:helicase activity"/>
    <property type="evidence" value="ECO:0007669"/>
    <property type="project" value="UniProtKB-UniRule"/>
</dbReference>
<dbReference type="GO" id="GO:0003723">
    <property type="term" value="F:RNA binding"/>
    <property type="evidence" value="ECO:0007669"/>
    <property type="project" value="UniProtKB-UniRule"/>
</dbReference>
<dbReference type="GO" id="GO:0006353">
    <property type="term" value="P:DNA-templated transcription termination"/>
    <property type="evidence" value="ECO:0007669"/>
    <property type="project" value="UniProtKB-UniRule"/>
</dbReference>
<dbReference type="CDD" id="cd01128">
    <property type="entry name" value="rho_factor_C"/>
    <property type="match status" value="1"/>
</dbReference>
<dbReference type="Gene3D" id="2.40.50.140">
    <property type="entry name" value="Nucleic acid-binding proteins"/>
    <property type="match status" value="1"/>
</dbReference>
<dbReference type="Gene3D" id="3.40.50.300">
    <property type="entry name" value="P-loop containing nucleotide triphosphate hydrolases"/>
    <property type="match status" value="1"/>
</dbReference>
<dbReference type="HAMAP" id="MF_01884">
    <property type="entry name" value="Rho"/>
    <property type="match status" value="1"/>
</dbReference>
<dbReference type="InterPro" id="IPR003593">
    <property type="entry name" value="AAA+_ATPase"/>
</dbReference>
<dbReference type="InterPro" id="IPR000194">
    <property type="entry name" value="ATPase_F1/V1/A1_a/bsu_nucl-bd"/>
</dbReference>
<dbReference type="InterPro" id="IPR012340">
    <property type="entry name" value="NA-bd_OB-fold"/>
</dbReference>
<dbReference type="InterPro" id="IPR027417">
    <property type="entry name" value="P-loop_NTPase"/>
</dbReference>
<dbReference type="InterPro" id="IPR041703">
    <property type="entry name" value="Rho_factor_ATP-bd"/>
</dbReference>
<dbReference type="InterPro" id="IPR011113">
    <property type="entry name" value="Rho_RNA-bd"/>
</dbReference>
<dbReference type="InterPro" id="IPR004665">
    <property type="entry name" value="Term_rho"/>
</dbReference>
<dbReference type="NCBIfam" id="NF006886">
    <property type="entry name" value="PRK09376.1"/>
    <property type="match status" value="1"/>
</dbReference>
<dbReference type="NCBIfam" id="TIGR00767">
    <property type="entry name" value="rho"/>
    <property type="match status" value="1"/>
</dbReference>
<dbReference type="PANTHER" id="PTHR46425">
    <property type="entry name" value="TRANSCRIPTION TERMINATION FACTOR RHO"/>
    <property type="match status" value="1"/>
</dbReference>
<dbReference type="PANTHER" id="PTHR46425:SF1">
    <property type="entry name" value="TRANSCRIPTION TERMINATION FACTOR RHO"/>
    <property type="match status" value="1"/>
</dbReference>
<dbReference type="Pfam" id="PF00006">
    <property type="entry name" value="ATP-synt_ab"/>
    <property type="match status" value="1"/>
</dbReference>
<dbReference type="Pfam" id="PF07497">
    <property type="entry name" value="Rho_RNA_bind"/>
    <property type="match status" value="1"/>
</dbReference>
<dbReference type="SMART" id="SM00382">
    <property type="entry name" value="AAA"/>
    <property type="match status" value="1"/>
</dbReference>
<dbReference type="SUPFAM" id="SSF50249">
    <property type="entry name" value="Nucleic acid-binding proteins"/>
    <property type="match status" value="1"/>
</dbReference>
<dbReference type="SUPFAM" id="SSF52540">
    <property type="entry name" value="P-loop containing nucleoside triphosphate hydrolases"/>
    <property type="match status" value="1"/>
</dbReference>
<dbReference type="PROSITE" id="PS51856">
    <property type="entry name" value="RHO_RNA_BD"/>
    <property type="match status" value="1"/>
</dbReference>
<name>RHO_STRM9</name>
<comment type="function">
    <text evidence="1">Facilitates transcription termination by a mechanism that involves Rho binding to the nascent RNA, activation of Rho's RNA-dependent ATPase activity, and release of the mRNA from the DNA template.</text>
</comment>
<comment type="subunit">
    <text evidence="1">Homohexamer. The homohexamer assembles into an open ring structure.</text>
</comment>
<comment type="similarity">
    <text evidence="1">Belongs to the Rho family.</text>
</comment>
<organism>
    <name type="scientific">Streptobacillus moniliformis (strain ATCC 14647 / DSM 12112 / NCTC 10651 / 9901)</name>
    <dbReference type="NCBI Taxonomy" id="519441"/>
    <lineage>
        <taxon>Bacteria</taxon>
        <taxon>Fusobacteriati</taxon>
        <taxon>Fusobacteriota</taxon>
        <taxon>Fusobacteriia</taxon>
        <taxon>Fusobacteriales</taxon>
        <taxon>Leptotrichiaceae</taxon>
        <taxon>Streptobacillus</taxon>
    </lineage>
</organism>
<evidence type="ECO:0000255" key="1">
    <source>
        <dbReference type="HAMAP-Rule" id="MF_01884"/>
    </source>
</evidence>
<evidence type="ECO:0000255" key="2">
    <source>
        <dbReference type="PROSITE-ProRule" id="PRU01203"/>
    </source>
</evidence>